<organism>
    <name type="scientific">Mus musculus</name>
    <name type="common">Mouse</name>
    <dbReference type="NCBI Taxonomy" id="10090"/>
    <lineage>
        <taxon>Eukaryota</taxon>
        <taxon>Metazoa</taxon>
        <taxon>Chordata</taxon>
        <taxon>Craniata</taxon>
        <taxon>Vertebrata</taxon>
        <taxon>Euteleostomi</taxon>
        <taxon>Mammalia</taxon>
        <taxon>Eutheria</taxon>
        <taxon>Euarchontoglires</taxon>
        <taxon>Glires</taxon>
        <taxon>Rodentia</taxon>
        <taxon>Myomorpha</taxon>
        <taxon>Muroidea</taxon>
        <taxon>Muridae</taxon>
        <taxon>Murinae</taxon>
        <taxon>Mus</taxon>
        <taxon>Mus</taxon>
    </lineage>
</organism>
<reference key="1">
    <citation type="journal article" date="1993" name="Oncogene">
        <title>Expression of a novel form of Tec kinase in hematopoietic cells and mapping of the gene to chromosome 5 near Kit.</title>
        <authorList>
            <person name="Mano H."/>
            <person name="Mano K."/>
            <person name="Tang B."/>
            <person name="Koehler M."/>
            <person name="Yi T."/>
            <person name="Gilbert D.J."/>
            <person name="Jenkins N.A."/>
            <person name="Copeland N.G."/>
            <person name="Ihle J.N."/>
        </authorList>
    </citation>
    <scope>NUCLEOTIDE SEQUENCE [MRNA] (ISOFORM 1)</scope>
</reference>
<reference key="2">
    <citation type="journal article" date="1999" name="Cytogenet. Cell Genet.">
        <title>Splice variants of the mouse Tec gene are differentially expressed in vivo.</title>
        <authorList>
            <person name="Merkel A.L."/>
            <person name="Atmosukarto I.I.C."/>
            <person name="Stevens K."/>
            <person name="Rathjen P.D."/>
            <person name="Booker G.W."/>
        </authorList>
    </citation>
    <scope>NUCLEOTIDE SEQUENCE [GENOMIC DNA] (ISOFORMS 1; 3; 4; 5 AND 6)</scope>
    <source>
        <strain>129</strain>
    </source>
</reference>
<reference key="3">
    <citation type="journal article" date="1990" name="Oncogene">
        <title>A novel protein-tyrosine kinase, tec, is preferentially expressed in liver.</title>
        <authorList>
            <person name="Mano H."/>
            <person name="Ishikawa F."/>
            <person name="Nishida J."/>
            <person name="Hirai H."/>
            <person name="Takaku F."/>
        </authorList>
    </citation>
    <scope>NUCLEOTIDE SEQUENCE [MRNA] OF 82-630 (ISOFORM 2)</scope>
    <source>
        <strain>BALB/cJ</strain>
        <tissue>Liver</tissue>
    </source>
</reference>
<reference key="4">
    <citation type="journal article" date="1989" name="Gene">
        <title>The application of the polymerase chain reaction to cloning members of the protein tyrosine kinase family.</title>
        <authorList>
            <person name="Wilks A.F."/>
            <person name="Kurban R.R."/>
            <person name="Hovens C.M."/>
            <person name="Ralph S.J."/>
        </authorList>
    </citation>
    <scope>NUCLEOTIDE SEQUENCE [MRNA] OF 485-553</scope>
</reference>
<reference key="5">
    <citation type="journal article" date="1996" name="Cell Growth Differ.">
        <title>Tec protein tyrosine kinase is involved in the signaling mechanism of granulocyte colony-stimulating factor receptor.</title>
        <authorList>
            <person name="Miyazato A."/>
            <person name="Yamashita Y."/>
            <person name="Hatake K."/>
            <person name="Miura Y."/>
            <person name="Ozawa K."/>
            <person name="Mano H."/>
        </authorList>
    </citation>
    <scope>PHOSPHORYLATION</scope>
    <scope>ACTIVITY REGULATION</scope>
    <scope>INTERACTION WITH VAV1</scope>
</reference>
<reference key="6">
    <citation type="journal article" date="1996" name="FASEB J.">
        <title>Tec protein-tyrosine kinase is an effector molecule of Lyn protein-tyrosine kinase.</title>
        <authorList>
            <person name="Mano H."/>
            <person name="Yamashita Y."/>
            <person name="Miyazato A."/>
            <person name="Miura Y."/>
            <person name="Ozawa K."/>
        </authorList>
    </citation>
    <scope>PHOSPHORYLATION BY LYN</scope>
    <scope>ACTIVITY REGULATION</scope>
    <scope>MUTAGENESIS OF LYS-397</scope>
</reference>
<reference key="7">
    <citation type="journal article" date="1998" name="Blood">
        <title>Tec and Jak2 kinases cooperate to mediate cytokine-driven activation of c-fos transcription.</title>
        <authorList>
            <person name="Yamashita Y."/>
            <person name="Watanabe S."/>
            <person name="Miyazato A."/>
            <person name="Ohya K."/>
            <person name="Ikeda U."/>
            <person name="Shimada K."/>
            <person name="Komatsu N."/>
            <person name="Hatake K."/>
            <person name="Miura Y."/>
            <person name="Ozawa K."/>
            <person name="Mano H."/>
        </authorList>
    </citation>
    <scope>FUNCTION</scope>
    <scope>PHOSPHORYLATION OF JAK2</scope>
    <scope>PHOSPHORYLATION AT TYR-518</scope>
</reference>
<reference key="8">
    <citation type="journal article" date="1999" name="Eur. J. Immunol.">
        <title>Tec kinase is involved in transcriptional regulation of IL-2 and IL-4 in the CD28 pathway.</title>
        <authorList>
            <person name="Yang W.C."/>
            <person name="Olive D."/>
        </authorList>
    </citation>
    <scope>ACTIVITY REGULATION</scope>
    <scope>FUNCTION IN THE CD28 SIGNALING PATHWAY</scope>
</reference>
<reference key="9">
    <citation type="journal article" date="1999" name="J. Biol. Chem.">
        <title>The role of Tec protein-tyrosine kinase in T cell signaling.</title>
        <authorList>
            <person name="Yang W.C."/>
            <person name="Ghiotto M."/>
            <person name="Barbarat B."/>
            <person name="Olive D."/>
        </authorList>
    </citation>
    <scope>INTERACTION WITH CD28</scope>
    <scope>ACTIVITY REGULATION</scope>
    <scope>FUNCTION IN PHOSPHORYLATION OF DOK1</scope>
</reference>
<reference key="10">
    <citation type="journal article" date="2004" name="Eur. J. Immunol.">
        <title>The SH3 domain of Tec kinase is essential for its targeting to activated CD28 costimulatory molecule.</title>
        <authorList>
            <person name="Garcon F."/>
            <person name="Ghiotto M."/>
            <person name="Gerard A."/>
            <person name="Yang W.C."/>
            <person name="Olive D."/>
            <person name="Nunes J.A."/>
        </authorList>
    </citation>
    <scope>FUNCTION</scope>
    <scope>SUBCELLULAR LOCATION</scope>
    <scope>DOMAIN</scope>
</reference>
<reference key="11">
    <citation type="journal article" date="2005" name="J. Biol. Chem.">
        <title>Dynamic regulation of Tec kinase localization in membrane-proximal vesicles of a T cell clone revealed by total internal reflection fluorescence and confocal microscopy.</title>
        <authorList>
            <person name="Kane L.P."/>
            <person name="Watkins S.C."/>
        </authorList>
    </citation>
    <scope>SUBCELLULAR LOCATION</scope>
</reference>
<reference key="12">
    <citation type="journal article" date="2007" name="J. Immunol.">
        <title>Quantitative time-resolved phosphoproteomic analysis of mast cell signaling.</title>
        <authorList>
            <person name="Cao L."/>
            <person name="Yu K."/>
            <person name="Banh C."/>
            <person name="Nguyen V."/>
            <person name="Ritz A."/>
            <person name="Raphael B.J."/>
            <person name="Kawakami Y."/>
            <person name="Kawakami T."/>
            <person name="Salomon A.R."/>
        </authorList>
    </citation>
    <scope>PHOSPHORYLATION [LARGE SCALE ANALYSIS] AT TYR-518</scope>
    <scope>IDENTIFICATION BY MASS SPECTROMETRY [LARGE SCALE ANALYSIS]</scope>
    <source>
        <tissue>Mast cell</tissue>
    </source>
</reference>
<reference key="13">
    <citation type="journal article" date="2009" name="Eur. J. Immunol.">
        <title>The protein tyrosine kinase Tec regulates mast cell function.</title>
        <authorList>
            <person name="Schmidt U."/>
            <person name="Abramova A."/>
            <person name="Boucheron N."/>
            <person name="Eckelhart E."/>
            <person name="Schebesta A."/>
            <person name="Bilic I."/>
            <person name="Kneidinger M."/>
            <person name="Unger B."/>
            <person name="Hammer M."/>
            <person name="Sibilia M."/>
            <person name="Valent P."/>
            <person name="Ellmeier W."/>
        </authorList>
    </citation>
    <scope>FUNCTION</scope>
</reference>
<reference key="14">
    <citation type="journal article" date="2009" name="Immunity">
        <title>The phagosomal proteome in interferon-gamma-activated macrophages.</title>
        <authorList>
            <person name="Trost M."/>
            <person name="English L."/>
            <person name="Lemieux S."/>
            <person name="Courcelles M."/>
            <person name="Desjardins M."/>
            <person name="Thibault P."/>
        </authorList>
    </citation>
    <scope>PHOSPHORYLATION [LARGE SCALE ANALYSIS] AT TYR-518</scope>
    <scope>IDENTIFICATION BY MASS SPECTROMETRY [LARGE SCALE ANALYSIS]</scope>
</reference>
<reference key="15">
    <citation type="journal article" date="2010" name="Am. J. Physiol.">
        <title>Stress signaling by Tec tyrosine kinase in the ischemic myocardium.</title>
        <authorList>
            <person name="Zhang M.J."/>
            <person name="Franklin S."/>
            <person name="Li Y."/>
            <person name="Wang S."/>
            <person name="Ru X."/>
            <person name="Mitchell-Jordan S.A."/>
            <person name="Mano H."/>
            <person name="Stefani E."/>
            <person name="Ping P."/>
            <person name="Vondriska T.M."/>
        </authorList>
    </citation>
    <scope>SUBCELLULAR LOCATION</scope>
</reference>
<reference key="16">
    <citation type="journal article" date="2011" name="Biochem. Biophys. Res. Commun.">
        <title>TEC protein tyrosine kinase is involved in the Erk signaling pathway induced by HGF.</title>
        <authorList>
            <person name="Li F."/>
            <person name="Jiang Y."/>
            <person name="Zheng Q."/>
            <person name="Yang X."/>
            <person name="Wang S."/>
        </authorList>
    </citation>
    <scope>FUNCTION IN THE HGF-INDUCED ERK SIGNALING PATHWAY</scope>
</reference>
<reference key="17">
    <citation type="journal article" date="2013" name="Cell Res.">
        <title>Early estrogen-induced gene 1, a novel RANK signaling component, is essential for osteoclastogenesis.</title>
        <authorList>
            <person name="Choi H.K."/>
            <person name="Kang H.R."/>
            <person name="Jung E."/>
            <person name="Kim T.E."/>
            <person name="Lin J.J."/>
            <person name="Lee S.Y."/>
        </authorList>
    </citation>
    <scope>IDENTIFICATION IN A COMPLEX WITH EEIG1; TNFRSF11A; PLCG2; GAB2 AND BTK</scope>
</reference>
<reference key="18">
    <citation type="journal article" date="2002" name="J. Biol. Chem.">
        <title>The solution structure and intramolecular associations of the Tec kinase SRC homology 3 domain.</title>
        <authorList>
            <person name="Pursglove S.E."/>
            <person name="Mulhern T.D."/>
            <person name="Mackay J.P."/>
            <person name="Hinds M.G."/>
            <person name="Booker G.W."/>
        </authorList>
    </citation>
    <scope>STRUCTURE BY NMR OF 179-245</scope>
</reference>
<keyword id="KW-0002">3D-structure</keyword>
<keyword id="KW-1064">Adaptive immunity</keyword>
<keyword id="KW-0025">Alternative splicing</keyword>
<keyword id="KW-0067">ATP-binding</keyword>
<keyword id="KW-1003">Cell membrane</keyword>
<keyword id="KW-0963">Cytoplasm</keyword>
<keyword id="KW-0206">Cytoskeleton</keyword>
<keyword id="KW-0391">Immunity</keyword>
<keyword id="KW-0418">Kinase</keyword>
<keyword id="KW-0446">Lipid-binding</keyword>
<keyword id="KW-0472">Membrane</keyword>
<keyword id="KW-0479">Metal-binding</keyword>
<keyword id="KW-0547">Nucleotide-binding</keyword>
<keyword id="KW-0597">Phosphoprotein</keyword>
<keyword id="KW-1185">Reference proteome</keyword>
<keyword id="KW-0727">SH2 domain</keyword>
<keyword id="KW-0728">SH3 domain</keyword>
<keyword id="KW-0808">Transferase</keyword>
<keyword id="KW-0829">Tyrosine-protein kinase</keyword>
<keyword id="KW-0862">Zinc</keyword>
<keyword id="KW-0863">Zinc-finger</keyword>
<feature type="chain" id="PRO_0000088171" description="Tyrosine-protein kinase Tec">
    <location>
        <begin position="1"/>
        <end position="630"/>
    </location>
</feature>
<feature type="domain" description="PH" evidence="3">
    <location>
        <begin position="4"/>
        <end position="111"/>
    </location>
</feature>
<feature type="domain" description="SH3" evidence="6">
    <location>
        <begin position="178"/>
        <end position="238"/>
    </location>
</feature>
<feature type="domain" description="SH2" evidence="5">
    <location>
        <begin position="246"/>
        <end position="344"/>
    </location>
</feature>
<feature type="domain" description="Protein kinase" evidence="4">
    <location>
        <begin position="369"/>
        <end position="622"/>
    </location>
</feature>
<feature type="zinc finger region" description="Btk-type" evidence="7">
    <location>
        <begin position="113"/>
        <end position="149"/>
    </location>
</feature>
<feature type="active site" description="Proton acceptor" evidence="4 8">
    <location>
        <position position="488"/>
    </location>
</feature>
<feature type="binding site" evidence="7">
    <location>
        <position position="121"/>
    </location>
    <ligand>
        <name>Zn(2+)</name>
        <dbReference type="ChEBI" id="CHEBI:29105"/>
    </ligand>
</feature>
<feature type="binding site" evidence="7">
    <location>
        <position position="132"/>
    </location>
    <ligand>
        <name>Zn(2+)</name>
        <dbReference type="ChEBI" id="CHEBI:29105"/>
    </ligand>
</feature>
<feature type="binding site" evidence="7">
    <location>
        <position position="133"/>
    </location>
    <ligand>
        <name>Zn(2+)</name>
        <dbReference type="ChEBI" id="CHEBI:29105"/>
    </ligand>
</feature>
<feature type="binding site" evidence="7">
    <location>
        <position position="143"/>
    </location>
    <ligand>
        <name>Zn(2+)</name>
        <dbReference type="ChEBI" id="CHEBI:29105"/>
    </ligand>
</feature>
<feature type="binding site" evidence="4">
    <location>
        <begin position="375"/>
        <end position="383"/>
    </location>
    <ligand>
        <name>ATP</name>
        <dbReference type="ChEBI" id="CHEBI:30616"/>
    </ligand>
</feature>
<feature type="binding site" evidence="4">
    <location>
        <position position="397"/>
    </location>
    <ligand>
        <name>ATP</name>
        <dbReference type="ChEBI" id="CHEBI:30616"/>
    </ligand>
</feature>
<feature type="modified residue" description="Phosphotyrosine; by autocatalysis" evidence="2">
    <location>
        <position position="205"/>
    </location>
</feature>
<feature type="modified residue" description="Phosphotyrosine" evidence="2">
    <location>
        <position position="227"/>
    </location>
</feature>
<feature type="modified residue" description="Phosphotyrosine; by autocatalysis, LYN and JAK2" evidence="16 20 21">
    <location>
        <position position="518"/>
    </location>
</feature>
<feature type="splice variant" id="VSP_005012" description="In isoform 2." evidence="18">
    <original>MNFNTILEEILIKRSQQKKKTSLLNYKERLCVLPKSVLSYYEGRAEKKYRKGVIDISKIKCVEIVKNDDGVIPCQNKFPFQVVHDANTLYIFAP</original>
    <variation>MMVSFPVKINFHS</variation>
    <location>
        <begin position="1"/>
        <end position="94"/>
    </location>
</feature>
<feature type="splice variant" id="VSP_005013" description="In isoform 6." evidence="19">
    <original>VVHDANTLYIFAPSPQSRD</original>
    <variation>STKQGPMGEEVKRRNKEQQ</variation>
    <location>
        <begin position="82"/>
        <end position="100"/>
    </location>
</feature>
<feature type="splice variant" id="VSP_005014" description="In isoform 6." evidence="19">
    <location>
        <begin position="101"/>
        <end position="630"/>
    </location>
</feature>
<feature type="splice variant" id="VSP_005015" description="In isoform 2, isoform 4 and isoform 5." evidence="18">
    <location>
        <begin position="224"/>
        <end position="245"/>
    </location>
</feature>
<feature type="splice variant" id="VSP_005016" description="In isoform 3 and isoform 4." evidence="19">
    <original>RPEGRPSLEDLLRTIDELVECEETFGR</original>
    <variation>ESCLCRVAQDLSSKNLIGSRF</variation>
    <location>
        <begin position="604"/>
        <end position="630"/>
    </location>
</feature>
<feature type="mutagenesis site" description="Impairs kinase activity." evidence="14">
    <original>K</original>
    <variation>M</variation>
    <location>
        <position position="397"/>
    </location>
</feature>
<feature type="sequence conflict" description="In Ref. 2; AAD43404/AAD43402/AAD43405/AAD43406/AAD43407." evidence="19" ref="2">
    <original>L</original>
    <variation>P</variation>
    <location>
        <position position="23"/>
    </location>
</feature>
<feature type="sequence conflict" description="In Ref. 2; AAD43404/AAD43402/AAD43405/AAD43406/AAD43407." evidence="19" ref="2">
    <original>C</original>
    <variation>F</variation>
    <location>
        <position position="31"/>
    </location>
</feature>
<feature type="sequence conflict" description="In Ref. 2; AAD43404/AAD43402/AAD43405/AAD43406/AAD43407." evidence="19" ref="2">
    <original>P</original>
    <variation>T</variation>
    <location>
        <position position="34"/>
    </location>
</feature>
<feature type="sequence conflict" description="In Ref. 4; AAA40018." evidence="19" ref="4">
    <original>V</original>
    <variation>E</variation>
    <location>
        <position position="535"/>
    </location>
</feature>
<feature type="sequence conflict" description="In Ref. 4; AAA40018." evidence="19" ref="4">
    <original>FGVL</original>
    <variation>YGIP</variation>
    <location>
        <begin position="550"/>
        <end position="553"/>
    </location>
</feature>
<feature type="sequence conflict" description="In Ref. 2; AAD43402/AAD43405/AAD43406/AAD43407." evidence="19" ref="2">
    <original>T</original>
    <variation>S</variation>
    <location>
        <position position="590"/>
    </location>
</feature>
<feature type="sequence conflict" description="In Ref. 2; AAD43404/AAD43402/AAD43405/AAD43406/AAD43407 and 3; CAA39196." evidence="19" ref="2 3">
    <original>L</original>
    <variation>F</variation>
    <location>
        <position position="611"/>
    </location>
</feature>
<feature type="strand" evidence="22">
    <location>
        <begin position="183"/>
        <end position="185"/>
    </location>
</feature>
<feature type="strand" evidence="22">
    <location>
        <begin position="192"/>
        <end position="196"/>
    </location>
</feature>
<feature type="strand" evidence="22">
    <location>
        <begin position="204"/>
        <end position="209"/>
    </location>
</feature>
<feature type="strand" evidence="22">
    <location>
        <begin position="211"/>
        <end position="219"/>
    </location>
</feature>
<feature type="strand" evidence="22">
    <location>
        <begin position="221"/>
        <end position="223"/>
    </location>
</feature>
<feature type="strand" evidence="22">
    <location>
        <begin position="225"/>
        <end position="229"/>
    </location>
</feature>
<feature type="strand" evidence="22">
    <location>
        <begin position="232"/>
        <end position="236"/>
    </location>
</feature>
<feature type="turn" evidence="22">
    <location>
        <begin position="237"/>
        <end position="241"/>
    </location>
</feature>
<evidence type="ECO:0000250" key="1"/>
<evidence type="ECO:0000250" key="2">
    <source>
        <dbReference type="UniProtKB" id="P42680"/>
    </source>
</evidence>
<evidence type="ECO:0000255" key="3">
    <source>
        <dbReference type="PROSITE-ProRule" id="PRU00145"/>
    </source>
</evidence>
<evidence type="ECO:0000255" key="4">
    <source>
        <dbReference type="PROSITE-ProRule" id="PRU00159"/>
    </source>
</evidence>
<evidence type="ECO:0000255" key="5">
    <source>
        <dbReference type="PROSITE-ProRule" id="PRU00191"/>
    </source>
</evidence>
<evidence type="ECO:0000255" key="6">
    <source>
        <dbReference type="PROSITE-ProRule" id="PRU00192"/>
    </source>
</evidence>
<evidence type="ECO:0000255" key="7">
    <source>
        <dbReference type="PROSITE-ProRule" id="PRU00432"/>
    </source>
</evidence>
<evidence type="ECO:0000255" key="8">
    <source>
        <dbReference type="PROSITE-ProRule" id="PRU10028"/>
    </source>
</evidence>
<evidence type="ECO:0000269" key="9">
    <source>
    </source>
</evidence>
<evidence type="ECO:0000269" key="10">
    <source>
    </source>
</evidence>
<evidence type="ECO:0000269" key="11">
    <source>
    </source>
</evidence>
<evidence type="ECO:0000269" key="12">
    <source>
    </source>
</evidence>
<evidence type="ECO:0000269" key="13">
    <source>
    </source>
</evidence>
<evidence type="ECO:0000269" key="14">
    <source>
    </source>
</evidence>
<evidence type="ECO:0000269" key="15">
    <source>
    </source>
</evidence>
<evidence type="ECO:0000269" key="16">
    <source>
    </source>
</evidence>
<evidence type="ECO:0000269" key="17">
    <source>
    </source>
</evidence>
<evidence type="ECO:0000303" key="18">
    <source>
    </source>
</evidence>
<evidence type="ECO:0000305" key="19"/>
<evidence type="ECO:0007744" key="20">
    <source>
    </source>
</evidence>
<evidence type="ECO:0007744" key="21">
    <source>
    </source>
</evidence>
<evidence type="ECO:0007829" key="22">
    <source>
        <dbReference type="PDB" id="1GL5"/>
    </source>
</evidence>
<name>TEC_MOUSE</name>
<accession>P24604</accession>
<accession>Q9R1M9</accession>
<accession>Q9WVN0</accession>
<accession>Q9WVN1</accession>
<accession>Q9WVN2</accession>
<accession>Q9WVN3</accession>
<protein>
    <recommendedName>
        <fullName>Tyrosine-protein kinase Tec</fullName>
        <ecNumber>2.7.10.2</ecNumber>
    </recommendedName>
</protein>
<dbReference type="EC" id="2.7.10.2"/>
<dbReference type="EMBL" id="S53716">
    <property type="protein sequence ID" value="AAA13515.2"/>
    <property type="molecule type" value="mRNA"/>
</dbReference>
<dbReference type="EMBL" id="AF071938">
    <property type="protein sequence ID" value="AAD43404.1"/>
    <property type="molecule type" value="Genomic_DNA"/>
</dbReference>
<dbReference type="EMBL" id="AF071936">
    <property type="protein sequence ID" value="AAD43404.1"/>
    <property type="status" value="JOINED"/>
    <property type="molecule type" value="Genomic_DNA"/>
</dbReference>
<dbReference type="EMBL" id="AF071937">
    <property type="protein sequence ID" value="AAD43404.1"/>
    <property type="status" value="JOINED"/>
    <property type="molecule type" value="Genomic_DNA"/>
</dbReference>
<dbReference type="EMBL" id="AF071946">
    <property type="protein sequence ID" value="AAD43402.1"/>
    <property type="molecule type" value="Genomic_DNA"/>
</dbReference>
<dbReference type="EMBL" id="AF071936">
    <property type="protein sequence ID" value="AAD43402.1"/>
    <property type="status" value="JOINED"/>
    <property type="molecule type" value="Genomic_DNA"/>
</dbReference>
<dbReference type="EMBL" id="AF071937">
    <property type="protein sequence ID" value="AAD43402.1"/>
    <property type="status" value="JOINED"/>
    <property type="molecule type" value="Genomic_DNA"/>
</dbReference>
<dbReference type="EMBL" id="AF071938">
    <property type="protein sequence ID" value="AAD43402.1"/>
    <property type="status" value="JOINED"/>
    <property type="molecule type" value="Genomic_DNA"/>
</dbReference>
<dbReference type="EMBL" id="AF071939">
    <property type="protein sequence ID" value="AAD43402.1"/>
    <property type="status" value="JOINED"/>
    <property type="molecule type" value="Genomic_DNA"/>
</dbReference>
<dbReference type="EMBL" id="AF071940">
    <property type="protein sequence ID" value="AAD43402.1"/>
    <property type="status" value="JOINED"/>
    <property type="molecule type" value="Genomic_DNA"/>
</dbReference>
<dbReference type="EMBL" id="AF071941">
    <property type="protein sequence ID" value="AAD43402.1"/>
    <property type="status" value="JOINED"/>
    <property type="molecule type" value="Genomic_DNA"/>
</dbReference>
<dbReference type="EMBL" id="AF071942">
    <property type="protein sequence ID" value="AAD43402.1"/>
    <property type="status" value="JOINED"/>
    <property type="molecule type" value="Genomic_DNA"/>
</dbReference>
<dbReference type="EMBL" id="AF071943">
    <property type="protein sequence ID" value="AAD43402.1"/>
    <property type="status" value="JOINED"/>
    <property type="molecule type" value="Genomic_DNA"/>
</dbReference>
<dbReference type="EMBL" id="AF071944">
    <property type="protein sequence ID" value="AAD43402.1"/>
    <property type="status" value="JOINED"/>
    <property type="molecule type" value="Genomic_DNA"/>
</dbReference>
<dbReference type="EMBL" id="AF071945">
    <property type="protein sequence ID" value="AAD43402.1"/>
    <property type="status" value="JOINED"/>
    <property type="molecule type" value="Genomic_DNA"/>
</dbReference>
<dbReference type="EMBL" id="AF071946">
    <property type="protein sequence ID" value="AAD43405.1"/>
    <property type="molecule type" value="Genomic_DNA"/>
</dbReference>
<dbReference type="EMBL" id="AF071936">
    <property type="protein sequence ID" value="AAD43405.1"/>
    <property type="status" value="JOINED"/>
    <property type="molecule type" value="Genomic_DNA"/>
</dbReference>
<dbReference type="EMBL" id="AF071937">
    <property type="protein sequence ID" value="AAD43405.1"/>
    <property type="status" value="JOINED"/>
    <property type="molecule type" value="Genomic_DNA"/>
</dbReference>
<dbReference type="EMBL" id="AF071938">
    <property type="protein sequence ID" value="AAD43405.1"/>
    <property type="status" value="JOINED"/>
    <property type="molecule type" value="Genomic_DNA"/>
</dbReference>
<dbReference type="EMBL" id="AF071939">
    <property type="protein sequence ID" value="AAD43405.1"/>
    <property type="status" value="JOINED"/>
    <property type="molecule type" value="Genomic_DNA"/>
</dbReference>
<dbReference type="EMBL" id="AF071940">
    <property type="protein sequence ID" value="AAD43405.1"/>
    <property type="status" value="JOINED"/>
    <property type="molecule type" value="Genomic_DNA"/>
</dbReference>
<dbReference type="EMBL" id="AF071941">
    <property type="protein sequence ID" value="AAD43405.1"/>
    <property type="status" value="JOINED"/>
    <property type="molecule type" value="Genomic_DNA"/>
</dbReference>
<dbReference type="EMBL" id="AF071942">
    <property type="protein sequence ID" value="AAD43405.1"/>
    <property type="status" value="JOINED"/>
    <property type="molecule type" value="Genomic_DNA"/>
</dbReference>
<dbReference type="EMBL" id="AF071943">
    <property type="protein sequence ID" value="AAD43405.1"/>
    <property type="status" value="JOINED"/>
    <property type="molecule type" value="Genomic_DNA"/>
</dbReference>
<dbReference type="EMBL" id="AF071944">
    <property type="protein sequence ID" value="AAD43405.1"/>
    <property type="status" value="JOINED"/>
    <property type="molecule type" value="Genomic_DNA"/>
</dbReference>
<dbReference type="EMBL" id="AF071945">
    <property type="protein sequence ID" value="AAD43405.1"/>
    <property type="status" value="JOINED"/>
    <property type="molecule type" value="Genomic_DNA"/>
</dbReference>
<dbReference type="EMBL" id="AF071946">
    <property type="protein sequence ID" value="AAD43406.1"/>
    <property type="molecule type" value="Genomic_DNA"/>
</dbReference>
<dbReference type="EMBL" id="AF071936">
    <property type="protein sequence ID" value="AAD43406.1"/>
    <property type="status" value="JOINED"/>
    <property type="molecule type" value="Genomic_DNA"/>
</dbReference>
<dbReference type="EMBL" id="AF071937">
    <property type="protein sequence ID" value="AAD43406.1"/>
    <property type="status" value="JOINED"/>
    <property type="molecule type" value="Genomic_DNA"/>
</dbReference>
<dbReference type="EMBL" id="AF071938">
    <property type="protein sequence ID" value="AAD43406.1"/>
    <property type="status" value="JOINED"/>
    <property type="molecule type" value="Genomic_DNA"/>
</dbReference>
<dbReference type="EMBL" id="AF071940">
    <property type="protein sequence ID" value="AAD43406.1"/>
    <property type="status" value="JOINED"/>
    <property type="molecule type" value="Genomic_DNA"/>
</dbReference>
<dbReference type="EMBL" id="AF071941">
    <property type="protein sequence ID" value="AAD43406.1"/>
    <property type="status" value="JOINED"/>
    <property type="molecule type" value="Genomic_DNA"/>
</dbReference>
<dbReference type="EMBL" id="AF071942">
    <property type="protein sequence ID" value="AAD43406.1"/>
    <property type="status" value="JOINED"/>
    <property type="molecule type" value="Genomic_DNA"/>
</dbReference>
<dbReference type="EMBL" id="AF071943">
    <property type="protein sequence ID" value="AAD43406.1"/>
    <property type="status" value="JOINED"/>
    <property type="molecule type" value="Genomic_DNA"/>
</dbReference>
<dbReference type="EMBL" id="AF071944">
    <property type="protein sequence ID" value="AAD43406.1"/>
    <property type="status" value="JOINED"/>
    <property type="molecule type" value="Genomic_DNA"/>
</dbReference>
<dbReference type="EMBL" id="AF071945">
    <property type="protein sequence ID" value="AAD43406.1"/>
    <property type="status" value="JOINED"/>
    <property type="molecule type" value="Genomic_DNA"/>
</dbReference>
<dbReference type="EMBL" id="AF071946">
    <property type="protein sequence ID" value="AAD43407.1"/>
    <property type="molecule type" value="Genomic_DNA"/>
</dbReference>
<dbReference type="EMBL" id="AF071936">
    <property type="protein sequence ID" value="AAD43407.1"/>
    <property type="status" value="JOINED"/>
    <property type="molecule type" value="Genomic_DNA"/>
</dbReference>
<dbReference type="EMBL" id="AF071937">
    <property type="protein sequence ID" value="AAD43407.1"/>
    <property type="status" value="JOINED"/>
    <property type="molecule type" value="Genomic_DNA"/>
</dbReference>
<dbReference type="EMBL" id="AF071938">
    <property type="protein sequence ID" value="AAD43407.1"/>
    <property type="status" value="JOINED"/>
    <property type="molecule type" value="Genomic_DNA"/>
</dbReference>
<dbReference type="EMBL" id="AF071940">
    <property type="protein sequence ID" value="AAD43407.1"/>
    <property type="status" value="JOINED"/>
    <property type="molecule type" value="Genomic_DNA"/>
</dbReference>
<dbReference type="EMBL" id="AF071941">
    <property type="protein sequence ID" value="AAD43407.1"/>
    <property type="status" value="JOINED"/>
    <property type="molecule type" value="Genomic_DNA"/>
</dbReference>
<dbReference type="EMBL" id="AF071942">
    <property type="protein sequence ID" value="AAD43407.1"/>
    <property type="status" value="JOINED"/>
    <property type="molecule type" value="Genomic_DNA"/>
</dbReference>
<dbReference type="EMBL" id="AF071943">
    <property type="protein sequence ID" value="AAD43407.1"/>
    <property type="status" value="JOINED"/>
    <property type="molecule type" value="Genomic_DNA"/>
</dbReference>
<dbReference type="EMBL" id="AF071944">
    <property type="protein sequence ID" value="AAD43407.1"/>
    <property type="status" value="JOINED"/>
    <property type="molecule type" value="Genomic_DNA"/>
</dbReference>
<dbReference type="EMBL" id="AF071945">
    <property type="protein sequence ID" value="AAD43407.1"/>
    <property type="status" value="JOINED"/>
    <property type="molecule type" value="Genomic_DNA"/>
</dbReference>
<dbReference type="EMBL" id="X55663">
    <property type="protein sequence ID" value="CAA39196.1"/>
    <property type="molecule type" value="mRNA"/>
</dbReference>
<dbReference type="EMBL" id="M33427">
    <property type="protein sequence ID" value="AAA40018.1"/>
    <property type="molecule type" value="mRNA"/>
</dbReference>
<dbReference type="CCDS" id="CCDS51515.1">
    <molecule id="P24604-5"/>
</dbReference>
<dbReference type="CCDS" id="CCDS51516.1">
    <molecule id="P24604-1"/>
</dbReference>
<dbReference type="PIR" id="JU0215">
    <property type="entry name" value="JU0215"/>
</dbReference>
<dbReference type="PIR" id="S13763">
    <property type="entry name" value="S13763"/>
</dbReference>
<dbReference type="PIR" id="T01380">
    <property type="entry name" value="T01380"/>
</dbReference>
<dbReference type="RefSeq" id="NP_001106931.1">
    <property type="nucleotide sequence ID" value="NM_001113460.2"/>
</dbReference>
<dbReference type="RefSeq" id="NP_001106932.1">
    <property type="nucleotide sequence ID" value="NM_001113461.2"/>
</dbReference>
<dbReference type="RefSeq" id="NP_001106935.1">
    <property type="nucleotide sequence ID" value="NM_001113464.2"/>
</dbReference>
<dbReference type="RefSeq" id="XP_006503908.1">
    <property type="nucleotide sequence ID" value="XM_006503845.3"/>
</dbReference>
<dbReference type="RefSeq" id="XP_006503909.1">
    <property type="nucleotide sequence ID" value="XM_006503846.3"/>
</dbReference>
<dbReference type="RefSeq" id="XP_011239020.1">
    <property type="nucleotide sequence ID" value="XM_011240718.2"/>
</dbReference>
<dbReference type="RefSeq" id="XP_011239021.1">
    <property type="nucleotide sequence ID" value="XM_011240719.2"/>
</dbReference>
<dbReference type="PDB" id="1GL5">
    <property type="method" value="NMR"/>
    <property type="chains" value="A=181-244"/>
</dbReference>
<dbReference type="PDBsum" id="1GL5"/>
<dbReference type="BMRB" id="P24604"/>
<dbReference type="SMR" id="P24604"/>
<dbReference type="BioGRID" id="204103">
    <property type="interactions" value="20"/>
</dbReference>
<dbReference type="FunCoup" id="P24604">
    <property type="interactions" value="246"/>
</dbReference>
<dbReference type="IntAct" id="P24604">
    <property type="interactions" value="2"/>
</dbReference>
<dbReference type="MINT" id="P24604"/>
<dbReference type="STRING" id="10090.ENSMUSP00000071836"/>
<dbReference type="iPTMnet" id="P24604"/>
<dbReference type="PhosphoSitePlus" id="P24604"/>
<dbReference type="PaxDb" id="10090-ENSMUSP00000071836"/>
<dbReference type="PeptideAtlas" id="P24604"/>
<dbReference type="ProteomicsDB" id="262858">
    <molecule id="P24604-1"/>
</dbReference>
<dbReference type="ProteomicsDB" id="262859">
    <molecule id="P24604-2"/>
</dbReference>
<dbReference type="ProteomicsDB" id="262860">
    <molecule id="P24604-3"/>
</dbReference>
<dbReference type="ProteomicsDB" id="262861">
    <molecule id="P24604-4"/>
</dbReference>
<dbReference type="ProteomicsDB" id="262862">
    <molecule id="P24604-5"/>
</dbReference>
<dbReference type="ProteomicsDB" id="262863">
    <molecule id="P24604-6"/>
</dbReference>
<dbReference type="DNASU" id="21682"/>
<dbReference type="GeneID" id="21682"/>
<dbReference type="KEGG" id="mmu:21682"/>
<dbReference type="AGR" id="MGI:98662"/>
<dbReference type="CTD" id="7006"/>
<dbReference type="MGI" id="MGI:98662">
    <property type="gene designation" value="Tec"/>
</dbReference>
<dbReference type="eggNOG" id="KOG0197">
    <property type="taxonomic scope" value="Eukaryota"/>
</dbReference>
<dbReference type="InParanoid" id="P24604"/>
<dbReference type="OrthoDB" id="4062651at2759"/>
<dbReference type="PhylomeDB" id="P24604"/>
<dbReference type="BRENDA" id="2.7.10.2">
    <property type="organism ID" value="3474"/>
</dbReference>
<dbReference type="Reactome" id="R-MMU-1433557">
    <property type="pathway name" value="Signaling by SCF-KIT"/>
</dbReference>
<dbReference type="Reactome" id="R-MMU-2871809">
    <property type="pathway name" value="FCERI mediated Ca+2 mobilization"/>
</dbReference>
<dbReference type="Reactome" id="R-MMU-512988">
    <property type="pathway name" value="Interleukin-3, Interleukin-5 and GM-CSF signaling"/>
</dbReference>
<dbReference type="BioGRID-ORCS" id="21682">
    <property type="hits" value="2 hits in 79 CRISPR screens"/>
</dbReference>
<dbReference type="EvolutionaryTrace" id="P24604"/>
<dbReference type="PRO" id="PR:P24604"/>
<dbReference type="Proteomes" id="UP000000589">
    <property type="component" value="Unplaced"/>
</dbReference>
<dbReference type="RNAct" id="P24604">
    <property type="molecule type" value="protein"/>
</dbReference>
<dbReference type="GO" id="GO:0005911">
    <property type="term" value="C:cell-cell junction"/>
    <property type="evidence" value="ECO:0000314"/>
    <property type="project" value="MGI"/>
</dbReference>
<dbReference type="GO" id="GO:0005856">
    <property type="term" value="C:cytoskeleton"/>
    <property type="evidence" value="ECO:0007669"/>
    <property type="project" value="UniProtKB-SubCell"/>
</dbReference>
<dbReference type="GO" id="GO:0005829">
    <property type="term" value="C:cytosol"/>
    <property type="evidence" value="ECO:0000304"/>
    <property type="project" value="Reactome"/>
</dbReference>
<dbReference type="GO" id="GO:0005886">
    <property type="term" value="C:plasma membrane"/>
    <property type="evidence" value="ECO:0007669"/>
    <property type="project" value="UniProtKB-SubCell"/>
</dbReference>
<dbReference type="GO" id="GO:0005524">
    <property type="term" value="F:ATP binding"/>
    <property type="evidence" value="ECO:0007669"/>
    <property type="project" value="UniProtKB-KW"/>
</dbReference>
<dbReference type="GO" id="GO:0008289">
    <property type="term" value="F:lipid binding"/>
    <property type="evidence" value="ECO:0007669"/>
    <property type="project" value="UniProtKB-KW"/>
</dbReference>
<dbReference type="GO" id="GO:0004715">
    <property type="term" value="F:non-membrane spanning protein tyrosine kinase activity"/>
    <property type="evidence" value="ECO:0007669"/>
    <property type="project" value="UniProtKB-EC"/>
</dbReference>
<dbReference type="GO" id="GO:0008270">
    <property type="term" value="F:zinc ion binding"/>
    <property type="evidence" value="ECO:0007669"/>
    <property type="project" value="UniProtKB-KW"/>
</dbReference>
<dbReference type="GO" id="GO:0002250">
    <property type="term" value="P:adaptive immune response"/>
    <property type="evidence" value="ECO:0007669"/>
    <property type="project" value="UniProtKB-KW"/>
</dbReference>
<dbReference type="GO" id="GO:0035556">
    <property type="term" value="P:intracellular signal transduction"/>
    <property type="evidence" value="ECO:0007669"/>
    <property type="project" value="InterPro"/>
</dbReference>
<dbReference type="CDD" id="cd01238">
    <property type="entry name" value="PH_Btk"/>
    <property type="match status" value="1"/>
</dbReference>
<dbReference type="CDD" id="cd05114">
    <property type="entry name" value="PTKc_Tec_Rlk"/>
    <property type="match status" value="1"/>
</dbReference>
<dbReference type="CDD" id="cd10396">
    <property type="entry name" value="SH2_Tec_Itk"/>
    <property type="match status" value="1"/>
</dbReference>
<dbReference type="CDD" id="cd11905">
    <property type="entry name" value="SH3_Tec"/>
    <property type="match status" value="1"/>
</dbReference>
<dbReference type="FunFam" id="1.10.510.10:FF:000052">
    <property type="entry name" value="Tyrosine-protein kinase"/>
    <property type="match status" value="1"/>
</dbReference>
<dbReference type="FunFam" id="2.30.29.30:FF:000210">
    <property type="entry name" value="Tyrosine-protein kinase"/>
    <property type="match status" value="1"/>
</dbReference>
<dbReference type="FunFam" id="2.30.30.40:FF:000151">
    <property type="entry name" value="Tyrosine-protein kinase"/>
    <property type="match status" value="1"/>
</dbReference>
<dbReference type="FunFam" id="3.30.200.20:FF:000053">
    <property type="entry name" value="Tyrosine-protein kinase"/>
    <property type="match status" value="1"/>
</dbReference>
<dbReference type="FunFam" id="3.30.505.10:FF:000041">
    <property type="entry name" value="Tyrosine-protein kinase"/>
    <property type="match status" value="1"/>
</dbReference>
<dbReference type="Gene3D" id="2.30.29.30">
    <property type="entry name" value="Pleckstrin-homology domain (PH domain)/Phosphotyrosine-binding domain (PTB)"/>
    <property type="match status" value="1"/>
</dbReference>
<dbReference type="Gene3D" id="3.30.505.10">
    <property type="entry name" value="SH2 domain"/>
    <property type="match status" value="1"/>
</dbReference>
<dbReference type="Gene3D" id="2.30.30.40">
    <property type="entry name" value="SH3 Domains"/>
    <property type="match status" value="1"/>
</dbReference>
<dbReference type="Gene3D" id="1.10.510.10">
    <property type="entry name" value="Transferase(Phosphotransferase) domain 1"/>
    <property type="match status" value="1"/>
</dbReference>
<dbReference type="InterPro" id="IPR011009">
    <property type="entry name" value="Kinase-like_dom_sf"/>
</dbReference>
<dbReference type="InterPro" id="IPR050198">
    <property type="entry name" value="Non-receptor_tyrosine_kinases"/>
</dbReference>
<dbReference type="InterPro" id="IPR011993">
    <property type="entry name" value="PH-like_dom_sf"/>
</dbReference>
<dbReference type="InterPro" id="IPR001849">
    <property type="entry name" value="PH_domain"/>
</dbReference>
<dbReference type="InterPro" id="IPR000719">
    <property type="entry name" value="Prot_kinase_dom"/>
</dbReference>
<dbReference type="InterPro" id="IPR017441">
    <property type="entry name" value="Protein_kinase_ATP_BS"/>
</dbReference>
<dbReference type="InterPro" id="IPR001245">
    <property type="entry name" value="Ser-Thr/Tyr_kinase_cat_dom"/>
</dbReference>
<dbReference type="InterPro" id="IPR000980">
    <property type="entry name" value="SH2"/>
</dbReference>
<dbReference type="InterPro" id="IPR036860">
    <property type="entry name" value="SH2_dom_sf"/>
</dbReference>
<dbReference type="InterPro" id="IPR036028">
    <property type="entry name" value="SH3-like_dom_sf"/>
</dbReference>
<dbReference type="InterPro" id="IPR001452">
    <property type="entry name" value="SH3_domain"/>
</dbReference>
<dbReference type="InterPro" id="IPR035572">
    <property type="entry name" value="Tec_SH3"/>
</dbReference>
<dbReference type="InterPro" id="IPR008266">
    <property type="entry name" value="Tyr_kinase_AS"/>
</dbReference>
<dbReference type="InterPro" id="IPR020635">
    <property type="entry name" value="Tyr_kinase_cat_dom"/>
</dbReference>
<dbReference type="InterPro" id="IPR001562">
    <property type="entry name" value="Znf_Btk_motif"/>
</dbReference>
<dbReference type="PANTHER" id="PTHR24418">
    <property type="entry name" value="TYROSINE-PROTEIN KINASE"/>
    <property type="match status" value="1"/>
</dbReference>
<dbReference type="Pfam" id="PF00779">
    <property type="entry name" value="BTK"/>
    <property type="match status" value="1"/>
</dbReference>
<dbReference type="Pfam" id="PF00169">
    <property type="entry name" value="PH"/>
    <property type="match status" value="1"/>
</dbReference>
<dbReference type="Pfam" id="PF07714">
    <property type="entry name" value="PK_Tyr_Ser-Thr"/>
    <property type="match status" value="1"/>
</dbReference>
<dbReference type="Pfam" id="PF00017">
    <property type="entry name" value="SH2"/>
    <property type="match status" value="1"/>
</dbReference>
<dbReference type="Pfam" id="PF00018">
    <property type="entry name" value="SH3_1"/>
    <property type="match status" value="1"/>
</dbReference>
<dbReference type="PRINTS" id="PR00401">
    <property type="entry name" value="SH2DOMAIN"/>
</dbReference>
<dbReference type="PRINTS" id="PR00452">
    <property type="entry name" value="SH3DOMAIN"/>
</dbReference>
<dbReference type="PRINTS" id="PR00402">
    <property type="entry name" value="TECBTKDOMAIN"/>
</dbReference>
<dbReference type="PRINTS" id="PR00109">
    <property type="entry name" value="TYRKINASE"/>
</dbReference>
<dbReference type="SMART" id="SM00107">
    <property type="entry name" value="BTK"/>
    <property type="match status" value="1"/>
</dbReference>
<dbReference type="SMART" id="SM00233">
    <property type="entry name" value="PH"/>
    <property type="match status" value="1"/>
</dbReference>
<dbReference type="SMART" id="SM00252">
    <property type="entry name" value="SH2"/>
    <property type="match status" value="1"/>
</dbReference>
<dbReference type="SMART" id="SM00326">
    <property type="entry name" value="SH3"/>
    <property type="match status" value="1"/>
</dbReference>
<dbReference type="SMART" id="SM00219">
    <property type="entry name" value="TyrKc"/>
    <property type="match status" value="1"/>
</dbReference>
<dbReference type="SUPFAM" id="SSF50729">
    <property type="entry name" value="PH domain-like"/>
    <property type="match status" value="1"/>
</dbReference>
<dbReference type="SUPFAM" id="SSF56112">
    <property type="entry name" value="Protein kinase-like (PK-like)"/>
    <property type="match status" value="1"/>
</dbReference>
<dbReference type="SUPFAM" id="SSF55550">
    <property type="entry name" value="SH2 domain"/>
    <property type="match status" value="1"/>
</dbReference>
<dbReference type="SUPFAM" id="SSF50044">
    <property type="entry name" value="SH3-domain"/>
    <property type="match status" value="1"/>
</dbReference>
<dbReference type="PROSITE" id="PS50003">
    <property type="entry name" value="PH_DOMAIN"/>
    <property type="match status" value="1"/>
</dbReference>
<dbReference type="PROSITE" id="PS00107">
    <property type="entry name" value="PROTEIN_KINASE_ATP"/>
    <property type="match status" value="1"/>
</dbReference>
<dbReference type="PROSITE" id="PS50011">
    <property type="entry name" value="PROTEIN_KINASE_DOM"/>
    <property type="match status" value="1"/>
</dbReference>
<dbReference type="PROSITE" id="PS00109">
    <property type="entry name" value="PROTEIN_KINASE_TYR"/>
    <property type="match status" value="1"/>
</dbReference>
<dbReference type="PROSITE" id="PS50001">
    <property type="entry name" value="SH2"/>
    <property type="match status" value="1"/>
</dbReference>
<dbReference type="PROSITE" id="PS50002">
    <property type="entry name" value="SH3"/>
    <property type="match status" value="1"/>
</dbReference>
<dbReference type="PROSITE" id="PS51113">
    <property type="entry name" value="ZF_BTK"/>
    <property type="match status" value="1"/>
</dbReference>
<comment type="function">
    <text evidence="9 10 11 12 16 17">Non-receptor tyrosine kinase that contributes to signaling from many receptors and participates as a signal transducer in multiple downstream pathways, including regulation of the actin cytoskeleton. Plays a redundant role to ITK in regulation of the adaptive immune response. Regulates the development, function and differentiation of conventional T-cells and nonconventional NKT-cells. Required for TCR-dependent IL2 gene induction. Phosphorylates DOK1, one CD28-specific substrate, and contributes to CD28-signaling. Mediates signals that negatively regulate IL2RA expression induced by TCR cross-linking. Plays a redundant role to BTK in BCR-signaling for B-cell development and activation, especially by phosphorylating STAP1, a BCR-signaling protein. Required in mast cells for efficient cytokine production. Involved in both growth and differentiation mechanisms of myeloid cells through activation by the granulocyte colony-stimulating factor CSF3, a critical cytokine to promoting the growth, differentiation, and functional activation of myeloid cells. Participates in platelet signaling downstream of integrin activation. Cooperates with JAK2 through reciprocal phosphorylation to mediate cytokine-driven activation of FOS transcription. GRB10, a negative modifier of the FOS activation pathway, is another substrate of TEC. TEC is involved in G protein-coupled receptor- and integrin-mediated signalings in blood platelets. Plays a role in hepatocyte proliferation and liver regeneration and is involved in HGF-induced ERK signaling pathway. TEC also regulates FGF2 unconventional secretion (endoplasmic reticulum (ER)/Golgi-independent mechanism) under various physiological conditions through phosphorylation of FGF2 'Tyr-82'. May also be involved in the regulation of osteoclast differentiation.</text>
</comment>
<comment type="catalytic activity">
    <reaction evidence="8">
        <text>L-tyrosyl-[protein] + ATP = O-phospho-L-tyrosyl-[protein] + ADP + H(+)</text>
        <dbReference type="Rhea" id="RHEA:10596"/>
        <dbReference type="Rhea" id="RHEA-COMP:10136"/>
        <dbReference type="Rhea" id="RHEA-COMP:20101"/>
        <dbReference type="ChEBI" id="CHEBI:15378"/>
        <dbReference type="ChEBI" id="CHEBI:30616"/>
        <dbReference type="ChEBI" id="CHEBI:46858"/>
        <dbReference type="ChEBI" id="CHEBI:61978"/>
        <dbReference type="ChEBI" id="CHEBI:456216"/>
        <dbReference type="EC" id="2.7.10.2"/>
    </reaction>
</comment>
<comment type="cofactor">
    <cofactor evidence="1">
        <name>Zn(2+)</name>
        <dbReference type="ChEBI" id="CHEBI:29105"/>
    </cofactor>
    <text evidence="1">Binds 1 zinc ion per subunit.</text>
</comment>
<comment type="activity regulation">
    <text evidence="9 14 15 17">Activated by tyrosine phosphorylation by a wide range of cytokine stimulations. When T-cells or B-cells receptors are activated, a series of phosphorylation leads to the recruitment of TEC to the cell membrane, where it is phosphorylated at Tyr-518. Also activated in response to SCF. Integrin engagement induces tyrosine phosphorylation of TEC in platelets. STAP1 participates in a positive feedback loop by increasing the activity of TEC. SOCS1 is an inhibitor of TEC kinase activity.</text>
</comment>
<comment type="subunit">
    <text evidence="1 13 15 17">Part of a complex composed of EEIG1, TNFRSF11A/RANK, PLCG2, GAB2, TEC and BTK; complex formation increases in the presence of TNFSF11/RANKL (PubMed:23478294). Interacts with INPP5D/SHIP1 and INPPL1/SHIP2. Interacts with CD28, FASLG, FGF2, GRB10 and KIT (By similarity). Interacts with VAV1 and JAK2. Interacts with LYN.</text>
</comment>
<comment type="subcellular location">
    <subcellularLocation>
        <location>Cytoplasm</location>
    </subcellularLocation>
    <subcellularLocation>
        <location>Cell membrane</location>
        <topology>Peripheral membrane protein</topology>
    </subcellularLocation>
    <subcellularLocation>
        <location>Cytoplasm</location>
        <location>Cytoskeleton</location>
    </subcellularLocation>
    <text evidence="1">Following B-cell or T-cell receptors activation by antigen, translocates to the plasma membrane through its PH domain. Thrombin and integrin engagement induces translocation of TEC to the cytoskeleton during platelet activation. In cardiac myocytes, assumes a diffuse intracellular localization under basal conditions but is recruited to striated structures upon various stimuli, including ATP (By similarity).</text>
</comment>
<comment type="alternative products">
    <event type="alternative splicing"/>
    <isoform>
        <id>P24604-1</id>
        <name>1</name>
        <name>TecIV</name>
        <sequence type="displayed"/>
    </isoform>
    <isoform>
        <id>P24604-2</id>
        <name>2</name>
        <sequence type="described" ref="VSP_005012 VSP_005015"/>
    </isoform>
    <isoform>
        <id>P24604-3</id>
        <name>3</name>
        <name>TecIIb</name>
        <sequence type="described" ref="VSP_005016"/>
    </isoform>
    <isoform>
        <id>P24604-4</id>
        <name>4</name>
        <name>TecIIa</name>
        <sequence type="described" ref="VSP_005015 VSP_005016"/>
    </isoform>
    <isoform>
        <id>P24604-5</id>
        <name>5</name>
        <name>TecIII</name>
        <sequence type="described" ref="VSP_005015"/>
    </isoform>
    <isoform>
        <id>P24604-6</id>
        <name>6</name>
        <name>TecI</name>
        <sequence type="described" ref="VSP_005013 VSP_005014"/>
    </isoform>
</comment>
<comment type="tissue specificity">
    <text>Preferentially expressed in liver. Expression is also seen in the hematopoietic cells such as bone marrow, thymus and spleen. Lower expression is seen in the heart, kidney and ovary.</text>
</comment>
<comment type="domain">
    <text evidence="10">The PH domain mediates the binding to inositol polyphosphate and phosphoinositides, leading to its targeting to the plasma membrane. It is extended in the BTK kinase family by a region designated the TH (Tec homology) domain, which consists of about 80 residues preceding the SH3 domain.</text>
</comment>
<comment type="domain">
    <text evidence="1">The SH3 domain is essential for its targeting to activated CD28 costimulatory molecule.</text>
</comment>
<comment type="PTM">
    <text evidence="14 15 16">Following B-cell or T-cell receptors engagement, translocates to the plasma membrane where it gets phosphorylated at Tyr-518. Undergoes also tyrosine phosphorylation during platelet activation.</text>
</comment>
<comment type="similarity">
    <text evidence="4">Belongs to the protein kinase superfamily. Tyr protein kinase family. TEC subfamily.</text>
</comment>
<sequence>MNFNTILEEILIKRSQQKKKTSLLNYKERLCVLPKSVLSYYEGRAEKKYRKGVIDISKIKCVEIVKNDDGVIPCQNKFPFQVVHDANTLYIFAPSPQSRDRWVKKLKEEIKNNNNIMIKYHPKFWADGSYQCCRQTEKLAPGCEKYNLFESSIRKTLPPAPEIKKRRPPPPIPPEEENTEEIVVAMYDFQATEAHDLRLERGQEYIILEKNDLHWWRARDKYGSEGYIPSNYVTGKKSNNLDQYEWYCRNTNRSKAEQLLRTEDKEGGFMVRDSSQPGLYTVSLYTKFGGEGSSGFRHYHIKETATSPKKYYLAEKHAFGSIPEIIEYHKHNAAGLVTRLRYPVSTKGKNAPTTAGFSYDKWEINPSELTFMRELGSGLFGVVRLGKWRAQYKVAIKAIREGAMCEEDFIEEAKVMMKLTHPKLVQLYGVCTQQKPIYIVTEFMERGCLLNFLRQRQGHFSRDMLLSMCQDVCEGMEYLERNSFIHRDLAARNCLVNEAGVVKVSDFGMARYVLDDQYTSSSGAKFPVKWCPPEVFNYSRFSSKSDVWSFGVLMWEIFTEGRMPFEKNTNYEVVTMVTRGHRLHRPKLATKYLYEVMLRCWQERPEGRPSLEDLLRTIDELVECEETFGR</sequence>
<proteinExistence type="evidence at protein level"/>
<gene>
    <name type="primary">Tec</name>
</gene>